<keyword id="KW-1185">Reference proteome</keyword>
<keyword id="KW-0687">Ribonucleoprotein</keyword>
<keyword id="KW-0689">Ribosomal protein</keyword>
<feature type="chain" id="PRO_1000017488" description="Large ribosomal subunit protein bL27">
    <location>
        <begin position="1"/>
        <end position="89"/>
    </location>
</feature>
<feature type="region of interest" description="Disordered" evidence="2">
    <location>
        <begin position="1"/>
        <end position="21"/>
    </location>
</feature>
<protein>
    <recommendedName>
        <fullName evidence="1">Large ribosomal subunit protein bL27</fullName>
    </recommendedName>
    <alternativeName>
        <fullName evidence="3">50S ribosomal protein L27</fullName>
    </alternativeName>
</protein>
<dbReference type="EMBL" id="CP000394">
    <property type="protein sequence ID" value="ABI62602.1"/>
    <property type="molecule type" value="Genomic_DNA"/>
</dbReference>
<dbReference type="RefSeq" id="WP_011632406.1">
    <property type="nucleotide sequence ID" value="NC_008343.2"/>
</dbReference>
<dbReference type="SMR" id="Q0BRF0"/>
<dbReference type="STRING" id="391165.GbCGDNIH1_1704"/>
<dbReference type="GeneID" id="69745921"/>
<dbReference type="KEGG" id="gbe:GbCGDNIH1_1704"/>
<dbReference type="eggNOG" id="COG0211">
    <property type="taxonomic scope" value="Bacteria"/>
</dbReference>
<dbReference type="HOGENOM" id="CLU_095424_4_0_5"/>
<dbReference type="OrthoDB" id="9803474at2"/>
<dbReference type="Proteomes" id="UP000001963">
    <property type="component" value="Chromosome"/>
</dbReference>
<dbReference type="GO" id="GO:0022625">
    <property type="term" value="C:cytosolic large ribosomal subunit"/>
    <property type="evidence" value="ECO:0007669"/>
    <property type="project" value="TreeGrafter"/>
</dbReference>
<dbReference type="GO" id="GO:0003735">
    <property type="term" value="F:structural constituent of ribosome"/>
    <property type="evidence" value="ECO:0007669"/>
    <property type="project" value="InterPro"/>
</dbReference>
<dbReference type="GO" id="GO:0006412">
    <property type="term" value="P:translation"/>
    <property type="evidence" value="ECO:0007669"/>
    <property type="project" value="UniProtKB-UniRule"/>
</dbReference>
<dbReference type="FunFam" id="2.40.50.100:FF:000060">
    <property type="entry name" value="Apicoplast ribosomal protein L27"/>
    <property type="match status" value="1"/>
</dbReference>
<dbReference type="Gene3D" id="2.40.50.100">
    <property type="match status" value="1"/>
</dbReference>
<dbReference type="HAMAP" id="MF_00539">
    <property type="entry name" value="Ribosomal_bL27"/>
    <property type="match status" value="1"/>
</dbReference>
<dbReference type="InterPro" id="IPR001684">
    <property type="entry name" value="Ribosomal_bL27"/>
</dbReference>
<dbReference type="InterPro" id="IPR018261">
    <property type="entry name" value="Ribosomal_bL27_CS"/>
</dbReference>
<dbReference type="NCBIfam" id="TIGR00062">
    <property type="entry name" value="L27"/>
    <property type="match status" value="1"/>
</dbReference>
<dbReference type="PANTHER" id="PTHR15893:SF0">
    <property type="entry name" value="LARGE RIBOSOMAL SUBUNIT PROTEIN BL27M"/>
    <property type="match status" value="1"/>
</dbReference>
<dbReference type="PANTHER" id="PTHR15893">
    <property type="entry name" value="RIBOSOMAL PROTEIN L27"/>
    <property type="match status" value="1"/>
</dbReference>
<dbReference type="Pfam" id="PF01016">
    <property type="entry name" value="Ribosomal_L27"/>
    <property type="match status" value="1"/>
</dbReference>
<dbReference type="PRINTS" id="PR00063">
    <property type="entry name" value="RIBOSOMALL27"/>
</dbReference>
<dbReference type="SUPFAM" id="SSF110324">
    <property type="entry name" value="Ribosomal L27 protein-like"/>
    <property type="match status" value="1"/>
</dbReference>
<dbReference type="PROSITE" id="PS00831">
    <property type="entry name" value="RIBOSOMAL_L27"/>
    <property type="match status" value="1"/>
</dbReference>
<gene>
    <name evidence="1" type="primary">rpmA</name>
    <name type="ordered locus">GbCGDNIH1_1704</name>
</gene>
<name>RL27_GRABC</name>
<proteinExistence type="inferred from homology"/>
<reference key="1">
    <citation type="journal article" date="2007" name="J. Bacteriol.">
        <title>Genome sequence analysis of the emerging human pathogenic acetic acid bacterium Granulibacter bethesdensis.</title>
        <authorList>
            <person name="Greenberg D.E."/>
            <person name="Porcella S.F."/>
            <person name="Zelazny A.M."/>
            <person name="Virtaneva K."/>
            <person name="Sturdevant D.E."/>
            <person name="Kupko J.J. III"/>
            <person name="Barbian K.D."/>
            <person name="Babar A."/>
            <person name="Dorward D.W."/>
            <person name="Holland S.M."/>
        </authorList>
    </citation>
    <scope>NUCLEOTIDE SEQUENCE [LARGE SCALE GENOMIC DNA]</scope>
    <source>
        <strain>ATCC BAA-1260 / CGDNIH1</strain>
    </source>
</reference>
<sequence length="89" mass="9388">MAHKKAGGSSRNGRDTEGRRLGVKKFGGESVVAGNIIVRQRGTKVQAGPNVGVGRDHTLFALTDGHVKFLRRAEGRVQVAVTPLAIAAE</sequence>
<comment type="similarity">
    <text evidence="1">Belongs to the bacterial ribosomal protein bL27 family.</text>
</comment>
<accession>Q0BRF0</accession>
<evidence type="ECO:0000255" key="1">
    <source>
        <dbReference type="HAMAP-Rule" id="MF_00539"/>
    </source>
</evidence>
<evidence type="ECO:0000256" key="2">
    <source>
        <dbReference type="SAM" id="MobiDB-lite"/>
    </source>
</evidence>
<evidence type="ECO:0000305" key="3"/>
<organism>
    <name type="scientific">Granulibacter bethesdensis (strain ATCC BAA-1260 / CGDNIH1)</name>
    <dbReference type="NCBI Taxonomy" id="391165"/>
    <lineage>
        <taxon>Bacteria</taxon>
        <taxon>Pseudomonadati</taxon>
        <taxon>Pseudomonadota</taxon>
        <taxon>Alphaproteobacteria</taxon>
        <taxon>Acetobacterales</taxon>
        <taxon>Acetobacteraceae</taxon>
        <taxon>Granulibacter</taxon>
    </lineage>
</organism>